<name>FENR_STRP4</name>
<accession>B5E6K6</accession>
<keyword id="KW-0274">FAD</keyword>
<keyword id="KW-0285">Flavoprotein</keyword>
<keyword id="KW-0521">NADP</keyword>
<keyword id="KW-0560">Oxidoreductase</keyword>
<sequence>MSQLYDITIVGGGPVGLFAAFYAHXRQAKVQIIDSLPQLGGQPAILYPEKEILDVPGFPNLTGEELTNRLIEQLNGFDTPIHLNETVLEIDKQEEEFAITTSKGSHLTKTVIIAMGGGAFKPRPLELESVEGYENIHYHVSNIQQYAGKKVTILGGGDSAVDWALAFEKIAPTTLVHRRDNFRALEHSVQALQESSVTIKTPFAPSQLLGNGKTLDKLEITKVKSDETETIDLDHLFVNYGFKSSVGNLKNWGLDLNRHKIIVNSKQESSQAGIYAIGDCCYYDGKIDLIATGLGEAPTAVNNAINYIDPEQKVQPKHSTSL</sequence>
<gene>
    <name type="ordered locus">SPG_1489</name>
</gene>
<reference key="1">
    <citation type="journal article" date="2001" name="Microb. Drug Resist.">
        <title>Annotated draft genomic sequence from a Streptococcus pneumoniae type 19F clinical isolate.</title>
        <authorList>
            <person name="Dopazo J."/>
            <person name="Mendoza A."/>
            <person name="Herrero J."/>
            <person name="Caldara F."/>
            <person name="Humbert Y."/>
            <person name="Friedli L."/>
            <person name="Guerrier M."/>
            <person name="Grand-Schenk E."/>
            <person name="Gandin C."/>
            <person name="de Francesco M."/>
            <person name="Polissi A."/>
            <person name="Buell G."/>
            <person name="Feger G."/>
            <person name="Garcia E."/>
            <person name="Peitsch M."/>
            <person name="Garcia-Bustos J.F."/>
        </authorList>
    </citation>
    <scope>NUCLEOTIDE SEQUENCE [LARGE SCALE GENOMIC DNA]</scope>
    <source>
        <strain>G54</strain>
    </source>
</reference>
<reference key="2">
    <citation type="submission" date="2008-03" db="EMBL/GenBank/DDBJ databases">
        <title>Pneumococcal beta glucoside metabolism investigated by whole genome comparison.</title>
        <authorList>
            <person name="Mulas L."/>
            <person name="Trappetti C."/>
            <person name="Hakenbeck R."/>
            <person name="Iannelli F."/>
            <person name="Pozzi G."/>
            <person name="Davidsen T.M."/>
            <person name="Tettelin H."/>
            <person name="Oggioni M."/>
        </authorList>
    </citation>
    <scope>NUCLEOTIDE SEQUENCE [LARGE SCALE GENOMIC DNA]</scope>
    <source>
        <strain>G54</strain>
    </source>
</reference>
<comment type="catalytic activity">
    <reaction evidence="1">
        <text>2 reduced [2Fe-2S]-[ferredoxin] + NADP(+) + H(+) = 2 oxidized [2Fe-2S]-[ferredoxin] + NADPH</text>
        <dbReference type="Rhea" id="RHEA:20125"/>
        <dbReference type="Rhea" id="RHEA-COMP:10000"/>
        <dbReference type="Rhea" id="RHEA-COMP:10001"/>
        <dbReference type="ChEBI" id="CHEBI:15378"/>
        <dbReference type="ChEBI" id="CHEBI:33737"/>
        <dbReference type="ChEBI" id="CHEBI:33738"/>
        <dbReference type="ChEBI" id="CHEBI:57783"/>
        <dbReference type="ChEBI" id="CHEBI:58349"/>
        <dbReference type="EC" id="1.18.1.2"/>
    </reaction>
</comment>
<comment type="cofactor">
    <cofactor evidence="1">
        <name>FAD</name>
        <dbReference type="ChEBI" id="CHEBI:57692"/>
    </cofactor>
    <text evidence="1">Binds 1 FAD per subunit.</text>
</comment>
<comment type="subunit">
    <text evidence="1">Homodimer.</text>
</comment>
<comment type="similarity">
    <text evidence="1">Belongs to the ferredoxin--NADP reductase type 2 family.</text>
</comment>
<protein>
    <recommendedName>
        <fullName evidence="1">Ferredoxin--NADP reductase</fullName>
        <shortName evidence="1">FNR</shortName>
        <shortName evidence="1">Fd-NADP(+) reductase</shortName>
        <ecNumber evidence="1">1.18.1.2</ecNumber>
    </recommendedName>
</protein>
<evidence type="ECO:0000255" key="1">
    <source>
        <dbReference type="HAMAP-Rule" id="MF_01685"/>
    </source>
</evidence>
<feature type="chain" id="PRO_0000364960" description="Ferredoxin--NADP reductase">
    <location>
        <begin position="1"/>
        <end position="322"/>
    </location>
</feature>
<feature type="binding site" evidence="1">
    <location>
        <position position="34"/>
    </location>
    <ligand>
        <name>FAD</name>
        <dbReference type="ChEBI" id="CHEBI:57692"/>
    </ligand>
</feature>
<feature type="binding site" evidence="1">
    <location>
        <position position="42"/>
    </location>
    <ligand>
        <name>FAD</name>
        <dbReference type="ChEBI" id="CHEBI:57692"/>
    </ligand>
</feature>
<feature type="binding site" evidence="1">
    <location>
        <position position="47"/>
    </location>
    <ligand>
        <name>FAD</name>
        <dbReference type="ChEBI" id="CHEBI:57692"/>
    </ligand>
</feature>
<feature type="binding site" evidence="1">
    <location>
        <position position="87"/>
    </location>
    <ligand>
        <name>FAD</name>
        <dbReference type="ChEBI" id="CHEBI:57692"/>
    </ligand>
</feature>
<feature type="binding site" evidence="1">
    <location>
        <position position="120"/>
    </location>
    <ligand>
        <name>FAD</name>
        <dbReference type="ChEBI" id="CHEBI:57692"/>
    </ligand>
</feature>
<feature type="binding site" evidence="1">
    <location>
        <position position="279"/>
    </location>
    <ligand>
        <name>FAD</name>
        <dbReference type="ChEBI" id="CHEBI:57692"/>
    </ligand>
</feature>
<feature type="binding site" evidence="1">
    <location>
        <position position="320"/>
    </location>
    <ligand>
        <name>FAD</name>
        <dbReference type="ChEBI" id="CHEBI:57692"/>
    </ligand>
</feature>
<organism>
    <name type="scientific">Streptococcus pneumoniae serotype 19F (strain G54)</name>
    <dbReference type="NCBI Taxonomy" id="512566"/>
    <lineage>
        <taxon>Bacteria</taxon>
        <taxon>Bacillati</taxon>
        <taxon>Bacillota</taxon>
        <taxon>Bacilli</taxon>
        <taxon>Lactobacillales</taxon>
        <taxon>Streptococcaceae</taxon>
        <taxon>Streptococcus</taxon>
    </lineage>
</organism>
<proteinExistence type="inferred from homology"/>
<dbReference type="EC" id="1.18.1.2" evidence="1"/>
<dbReference type="EMBL" id="CP001015">
    <property type="protein sequence ID" value="ACF56155.1"/>
    <property type="molecule type" value="Genomic_DNA"/>
</dbReference>
<dbReference type="KEGG" id="spx:SPG_1489"/>
<dbReference type="HOGENOM" id="CLU_031864_5_5_9"/>
<dbReference type="GO" id="GO:0004324">
    <property type="term" value="F:ferredoxin-NADP+ reductase activity"/>
    <property type="evidence" value="ECO:0007669"/>
    <property type="project" value="UniProtKB-UniRule"/>
</dbReference>
<dbReference type="GO" id="GO:0050660">
    <property type="term" value="F:flavin adenine dinucleotide binding"/>
    <property type="evidence" value="ECO:0007669"/>
    <property type="project" value="UniProtKB-UniRule"/>
</dbReference>
<dbReference type="GO" id="GO:0050661">
    <property type="term" value="F:NADP binding"/>
    <property type="evidence" value="ECO:0007669"/>
    <property type="project" value="UniProtKB-UniRule"/>
</dbReference>
<dbReference type="Gene3D" id="3.50.50.60">
    <property type="entry name" value="FAD/NAD(P)-binding domain"/>
    <property type="match status" value="2"/>
</dbReference>
<dbReference type="HAMAP" id="MF_01685">
    <property type="entry name" value="FENR2"/>
    <property type="match status" value="1"/>
</dbReference>
<dbReference type="InterPro" id="IPR036188">
    <property type="entry name" value="FAD/NAD-bd_sf"/>
</dbReference>
<dbReference type="InterPro" id="IPR023753">
    <property type="entry name" value="FAD/NAD-binding_dom"/>
</dbReference>
<dbReference type="InterPro" id="IPR022890">
    <property type="entry name" value="Fd--NADP_Rdtase_type_2"/>
</dbReference>
<dbReference type="InterPro" id="IPR050097">
    <property type="entry name" value="Ferredoxin-NADP_redctase_2"/>
</dbReference>
<dbReference type="PANTHER" id="PTHR48105">
    <property type="entry name" value="THIOREDOXIN REDUCTASE 1-RELATED-RELATED"/>
    <property type="match status" value="1"/>
</dbReference>
<dbReference type="Pfam" id="PF07992">
    <property type="entry name" value="Pyr_redox_2"/>
    <property type="match status" value="1"/>
</dbReference>
<dbReference type="PRINTS" id="PR00368">
    <property type="entry name" value="FADPNR"/>
</dbReference>
<dbReference type="PRINTS" id="PR00469">
    <property type="entry name" value="PNDRDTASEII"/>
</dbReference>
<dbReference type="SUPFAM" id="SSF51905">
    <property type="entry name" value="FAD/NAD(P)-binding domain"/>
    <property type="match status" value="1"/>
</dbReference>